<dbReference type="EMBL" id="AE005174">
    <property type="protein sequence ID" value="AAG55234.1"/>
    <property type="molecule type" value="Genomic_DNA"/>
</dbReference>
<dbReference type="EMBL" id="BA000007">
    <property type="protein sequence ID" value="BAB34361.1"/>
    <property type="molecule type" value="Genomic_DNA"/>
</dbReference>
<dbReference type="PIR" id="B90746">
    <property type="entry name" value="B90746"/>
</dbReference>
<dbReference type="PIR" id="F85596">
    <property type="entry name" value="F85596"/>
</dbReference>
<dbReference type="RefSeq" id="NP_308965.1">
    <property type="nucleotide sequence ID" value="NC_002695.1"/>
</dbReference>
<dbReference type="RefSeq" id="WP_000389260.1">
    <property type="nucleotide sequence ID" value="NZ_VOAI01000006.1"/>
</dbReference>
<dbReference type="STRING" id="155864.Z1085"/>
<dbReference type="GeneID" id="917683"/>
<dbReference type="KEGG" id="ece:Z1085"/>
<dbReference type="KEGG" id="ecs:ECs_0938"/>
<dbReference type="PATRIC" id="fig|386585.9.peg.1056"/>
<dbReference type="eggNOG" id="ENOG5032W9M">
    <property type="taxonomic scope" value="Bacteria"/>
</dbReference>
<dbReference type="HOGENOM" id="CLU_142271_0_0_6"/>
<dbReference type="OMA" id="TGYLWAA"/>
<dbReference type="Proteomes" id="UP000000558">
    <property type="component" value="Chromosome"/>
</dbReference>
<dbReference type="Proteomes" id="UP000002519">
    <property type="component" value="Chromosome"/>
</dbReference>
<dbReference type="GO" id="GO:0005886">
    <property type="term" value="C:plasma membrane"/>
    <property type="evidence" value="ECO:0007669"/>
    <property type="project" value="UniProtKB-SubCell"/>
</dbReference>
<dbReference type="InterPro" id="IPR019703">
    <property type="entry name" value="YbjO_DH-like"/>
</dbReference>
<dbReference type="Pfam" id="PF10767">
    <property type="entry name" value="YbjO_DH-like"/>
    <property type="match status" value="1"/>
</dbReference>
<name>YBJO_ECO57</name>
<gene>
    <name type="primary">ybjO</name>
    <name type="ordered locus">Z1085</name>
    <name type="ordered locus">ECs0938</name>
</gene>
<feature type="chain" id="PRO_0000168748" description="Inner membrane protein YbjO">
    <location>
        <begin position="1"/>
        <end position="162"/>
    </location>
</feature>
<feature type="topological domain" description="Periplasmic" evidence="2">
    <location>
        <begin position="1"/>
        <end position="23"/>
    </location>
</feature>
<feature type="transmembrane region" description="Helical" evidence="2">
    <location>
        <begin position="24"/>
        <end position="44"/>
    </location>
</feature>
<feature type="topological domain" description="Cytoplasmic" evidence="2">
    <location>
        <begin position="45"/>
        <end position="66"/>
    </location>
</feature>
<feature type="transmembrane region" description="Helical" evidence="2">
    <location>
        <begin position="67"/>
        <end position="87"/>
    </location>
</feature>
<feature type="topological domain" description="Periplasmic" evidence="2">
    <location>
        <begin position="88"/>
        <end position="94"/>
    </location>
</feature>
<feature type="transmembrane region" description="Helical" evidence="2">
    <location>
        <begin position="95"/>
        <end position="115"/>
    </location>
</feature>
<feature type="topological domain" description="Cytoplasmic" evidence="2">
    <location>
        <begin position="116"/>
        <end position="162"/>
    </location>
</feature>
<organism>
    <name type="scientific">Escherichia coli O157:H7</name>
    <dbReference type="NCBI Taxonomy" id="83334"/>
    <lineage>
        <taxon>Bacteria</taxon>
        <taxon>Pseudomonadati</taxon>
        <taxon>Pseudomonadota</taxon>
        <taxon>Gammaproteobacteria</taxon>
        <taxon>Enterobacterales</taxon>
        <taxon>Enterobacteriaceae</taxon>
        <taxon>Escherichia</taxon>
    </lineage>
</organism>
<accession>P0AAZ2</accession>
<accession>P75816</accession>
<protein>
    <recommendedName>
        <fullName>Inner membrane protein YbjO</fullName>
    </recommendedName>
</protein>
<sequence>MEDETLGFFKKTSSSHARLNVPALVQVAALAIIMIRGLDVLMIFNTLGVRGIGEFIHRSVQTWSLTLVFLSSLVLVFIEIWCAFSLVKGRRWARWLYLLTQITAASYLWAASLGYGYPELFSIPGESKREIFHSLMLQKLPDMLILMLLFVPSTSRRFFQLQ</sequence>
<proteinExistence type="inferred from homology"/>
<keyword id="KW-0997">Cell inner membrane</keyword>
<keyword id="KW-1003">Cell membrane</keyword>
<keyword id="KW-0472">Membrane</keyword>
<keyword id="KW-1185">Reference proteome</keyword>
<keyword id="KW-0812">Transmembrane</keyword>
<keyword id="KW-1133">Transmembrane helix</keyword>
<evidence type="ECO:0000250" key="1"/>
<evidence type="ECO:0000255" key="2"/>
<reference key="1">
    <citation type="journal article" date="2001" name="Nature">
        <title>Genome sequence of enterohaemorrhagic Escherichia coli O157:H7.</title>
        <authorList>
            <person name="Perna N.T."/>
            <person name="Plunkett G. III"/>
            <person name="Burland V."/>
            <person name="Mau B."/>
            <person name="Glasner J.D."/>
            <person name="Rose D.J."/>
            <person name="Mayhew G.F."/>
            <person name="Evans P.S."/>
            <person name="Gregor J."/>
            <person name="Kirkpatrick H.A."/>
            <person name="Posfai G."/>
            <person name="Hackett J."/>
            <person name="Klink S."/>
            <person name="Boutin A."/>
            <person name="Shao Y."/>
            <person name="Miller L."/>
            <person name="Grotbeck E.J."/>
            <person name="Davis N.W."/>
            <person name="Lim A."/>
            <person name="Dimalanta E.T."/>
            <person name="Potamousis K."/>
            <person name="Apodaca J."/>
            <person name="Anantharaman T.S."/>
            <person name="Lin J."/>
            <person name="Yen G."/>
            <person name="Schwartz D.C."/>
            <person name="Welch R.A."/>
            <person name="Blattner F.R."/>
        </authorList>
    </citation>
    <scope>NUCLEOTIDE SEQUENCE [LARGE SCALE GENOMIC DNA]</scope>
    <source>
        <strain>O157:H7 / EDL933 / ATCC 700927 / EHEC</strain>
    </source>
</reference>
<reference key="2">
    <citation type="journal article" date="2001" name="DNA Res.">
        <title>Complete genome sequence of enterohemorrhagic Escherichia coli O157:H7 and genomic comparison with a laboratory strain K-12.</title>
        <authorList>
            <person name="Hayashi T."/>
            <person name="Makino K."/>
            <person name="Ohnishi M."/>
            <person name="Kurokawa K."/>
            <person name="Ishii K."/>
            <person name="Yokoyama K."/>
            <person name="Han C.-G."/>
            <person name="Ohtsubo E."/>
            <person name="Nakayama K."/>
            <person name="Murata T."/>
            <person name="Tanaka M."/>
            <person name="Tobe T."/>
            <person name="Iida T."/>
            <person name="Takami H."/>
            <person name="Honda T."/>
            <person name="Sasakawa C."/>
            <person name="Ogasawara N."/>
            <person name="Yasunaga T."/>
            <person name="Kuhara S."/>
            <person name="Shiba T."/>
            <person name="Hattori M."/>
            <person name="Shinagawa H."/>
        </authorList>
    </citation>
    <scope>NUCLEOTIDE SEQUENCE [LARGE SCALE GENOMIC DNA]</scope>
    <source>
        <strain>O157:H7 / Sakai / RIMD 0509952 / EHEC</strain>
    </source>
</reference>
<comment type="subcellular location">
    <subcellularLocation>
        <location evidence="1">Cell inner membrane</location>
        <topology evidence="1">Multi-pass membrane protein</topology>
    </subcellularLocation>
</comment>